<gene>
    <name type="primary">Pdgfrb</name>
    <name type="synonym">Pdgfr</name>
    <name type="synonym">Pdgfr1</name>
</gene>
<dbReference type="EC" id="2.7.10.1"/>
<dbReference type="EMBL" id="AY090783">
    <property type="protein sequence ID" value="AAM09098.1"/>
    <property type="molecule type" value="mRNA"/>
</dbReference>
<dbReference type="EMBL" id="Z14119">
    <property type="protein sequence ID" value="CAA78489.1"/>
    <property type="molecule type" value="mRNA"/>
</dbReference>
<dbReference type="EMBL" id="AF359356">
    <property type="protein sequence ID" value="AAK43716.1"/>
    <property type="molecule type" value="mRNA"/>
</dbReference>
<dbReference type="PIR" id="S33766">
    <property type="entry name" value="S33766"/>
</dbReference>
<dbReference type="RefSeq" id="NP_113713.1">
    <property type="nucleotide sequence ID" value="NM_031525.2"/>
</dbReference>
<dbReference type="RefSeq" id="XP_006254851.1">
    <property type="nucleotide sequence ID" value="XM_006254789.3"/>
</dbReference>
<dbReference type="RefSeq" id="XP_038952501.1">
    <property type="nucleotide sequence ID" value="XM_039096573.2"/>
</dbReference>
<dbReference type="SMR" id="Q05030"/>
<dbReference type="BioGRID" id="246767">
    <property type="interactions" value="2"/>
</dbReference>
<dbReference type="FunCoup" id="Q05030">
    <property type="interactions" value="1565"/>
</dbReference>
<dbReference type="IntAct" id="Q05030">
    <property type="interactions" value="2"/>
</dbReference>
<dbReference type="MINT" id="Q05030"/>
<dbReference type="STRING" id="10116.ENSRNOP00000060534"/>
<dbReference type="BindingDB" id="Q05030"/>
<dbReference type="ChEMBL" id="CHEMBL4125"/>
<dbReference type="DrugCentral" id="Q05030"/>
<dbReference type="GlyCosmos" id="Q05030">
    <property type="glycosylation" value="11 sites, No reported glycans"/>
</dbReference>
<dbReference type="GlyGen" id="Q05030">
    <property type="glycosylation" value="13 sites"/>
</dbReference>
<dbReference type="iPTMnet" id="Q05030"/>
<dbReference type="PhosphoSitePlus" id="Q05030"/>
<dbReference type="jPOST" id="Q05030"/>
<dbReference type="PaxDb" id="10116-ENSRNOP00000060534"/>
<dbReference type="ABCD" id="Q05030">
    <property type="antibodies" value="1 sequenced antibody"/>
</dbReference>
<dbReference type="GeneID" id="24629"/>
<dbReference type="KEGG" id="rno:24629"/>
<dbReference type="UCSC" id="RGD:3285">
    <property type="organism name" value="rat"/>
</dbReference>
<dbReference type="AGR" id="RGD:3285"/>
<dbReference type="CTD" id="5159"/>
<dbReference type="RGD" id="3285">
    <property type="gene designation" value="Pdgfrb"/>
</dbReference>
<dbReference type="VEuPathDB" id="HostDB:ENSRNOG00000018461"/>
<dbReference type="eggNOG" id="KOG0200">
    <property type="taxonomic scope" value="Eukaryota"/>
</dbReference>
<dbReference type="HOGENOM" id="CLU_000288_49_0_1"/>
<dbReference type="InParanoid" id="Q05030"/>
<dbReference type="PhylomeDB" id="Q05030"/>
<dbReference type="Reactome" id="R-RNO-1257604">
    <property type="pathway name" value="PIP3 activates AKT signaling"/>
</dbReference>
<dbReference type="Reactome" id="R-RNO-186763">
    <property type="pathway name" value="Downstream signal transduction"/>
</dbReference>
<dbReference type="Reactome" id="R-RNO-186797">
    <property type="pathway name" value="Signaling by PDGF"/>
</dbReference>
<dbReference type="Reactome" id="R-RNO-5673001">
    <property type="pathway name" value="RAF/MAP kinase cascade"/>
</dbReference>
<dbReference type="Reactome" id="R-RNO-6811558">
    <property type="pathway name" value="PI5P, PP2A and IER3 Regulate PI3K/AKT Signaling"/>
</dbReference>
<dbReference type="PRO" id="PR:Q05030"/>
<dbReference type="Proteomes" id="UP000002494">
    <property type="component" value="Chromosome 18"/>
</dbReference>
<dbReference type="Bgee" id="ENSRNOG00000018461">
    <property type="expression patterns" value="Expressed in ovary and 18 other cell types or tissues"/>
</dbReference>
<dbReference type="GO" id="GO:0016324">
    <property type="term" value="C:apical plasma membrane"/>
    <property type="evidence" value="ECO:0000314"/>
    <property type="project" value="UniProtKB"/>
</dbReference>
<dbReference type="GO" id="GO:0009986">
    <property type="term" value="C:cell surface"/>
    <property type="evidence" value="ECO:0000314"/>
    <property type="project" value="RGD"/>
</dbReference>
<dbReference type="GO" id="GO:0005737">
    <property type="term" value="C:cytoplasm"/>
    <property type="evidence" value="ECO:0000314"/>
    <property type="project" value="UniProtKB"/>
</dbReference>
<dbReference type="GO" id="GO:0031410">
    <property type="term" value="C:cytoplasmic vesicle"/>
    <property type="evidence" value="ECO:0007669"/>
    <property type="project" value="UniProtKB-KW"/>
</dbReference>
<dbReference type="GO" id="GO:0043202">
    <property type="term" value="C:lysosomal lumen"/>
    <property type="evidence" value="ECO:0007669"/>
    <property type="project" value="UniProtKB-SubCell"/>
</dbReference>
<dbReference type="GO" id="GO:0016020">
    <property type="term" value="C:membrane"/>
    <property type="evidence" value="ECO:0000250"/>
    <property type="project" value="UniProtKB"/>
</dbReference>
<dbReference type="GO" id="GO:0005634">
    <property type="term" value="C:nucleus"/>
    <property type="evidence" value="ECO:0000314"/>
    <property type="project" value="UniProtKB"/>
</dbReference>
<dbReference type="GO" id="GO:0005886">
    <property type="term" value="C:plasma membrane"/>
    <property type="evidence" value="ECO:0000314"/>
    <property type="project" value="UniProtKB"/>
</dbReference>
<dbReference type="GO" id="GO:0043235">
    <property type="term" value="C:receptor complex"/>
    <property type="evidence" value="ECO:0000318"/>
    <property type="project" value="GO_Central"/>
</dbReference>
<dbReference type="GO" id="GO:0001726">
    <property type="term" value="C:ruffle"/>
    <property type="evidence" value="ECO:0000266"/>
    <property type="project" value="RGD"/>
</dbReference>
<dbReference type="GO" id="GO:0005524">
    <property type="term" value="F:ATP binding"/>
    <property type="evidence" value="ECO:0007669"/>
    <property type="project" value="UniProtKB-KW"/>
</dbReference>
<dbReference type="GO" id="GO:0019899">
    <property type="term" value="F:enzyme binding"/>
    <property type="evidence" value="ECO:0000266"/>
    <property type="project" value="RGD"/>
</dbReference>
<dbReference type="GO" id="GO:0005096">
    <property type="term" value="F:GTPase activator activity"/>
    <property type="evidence" value="ECO:0000250"/>
    <property type="project" value="UniProtKB"/>
</dbReference>
<dbReference type="GO" id="GO:0016301">
    <property type="term" value="F:kinase activity"/>
    <property type="evidence" value="ECO:0000266"/>
    <property type="project" value="RGD"/>
</dbReference>
<dbReference type="GO" id="GO:0043548">
    <property type="term" value="F:phosphatidylinositol 3-kinase binding"/>
    <property type="evidence" value="ECO:0000353"/>
    <property type="project" value="RGD"/>
</dbReference>
<dbReference type="GO" id="GO:0160185">
    <property type="term" value="F:phospholipase C activator activity"/>
    <property type="evidence" value="ECO:0000250"/>
    <property type="project" value="UniProtKB"/>
</dbReference>
<dbReference type="GO" id="GO:0005019">
    <property type="term" value="F:platelet-derived growth factor beta-receptor activity"/>
    <property type="evidence" value="ECO:0000250"/>
    <property type="project" value="UniProtKB"/>
</dbReference>
<dbReference type="GO" id="GO:0048407">
    <property type="term" value="F:platelet-derived growth factor binding"/>
    <property type="evidence" value="ECO:0000266"/>
    <property type="project" value="RGD"/>
</dbReference>
<dbReference type="GO" id="GO:0005017">
    <property type="term" value="F:platelet-derived growth factor receptor activity"/>
    <property type="evidence" value="ECO:0000314"/>
    <property type="project" value="RGD"/>
</dbReference>
<dbReference type="GO" id="GO:0005161">
    <property type="term" value="F:platelet-derived growth factor receptor binding"/>
    <property type="evidence" value="ECO:0000266"/>
    <property type="project" value="RGD"/>
</dbReference>
<dbReference type="GO" id="GO:0004672">
    <property type="term" value="F:protein kinase activity"/>
    <property type="evidence" value="ECO:0000266"/>
    <property type="project" value="RGD"/>
</dbReference>
<dbReference type="GO" id="GO:0019901">
    <property type="term" value="F:protein kinase binding"/>
    <property type="evidence" value="ECO:0000266"/>
    <property type="project" value="RGD"/>
</dbReference>
<dbReference type="GO" id="GO:0004713">
    <property type="term" value="F:protein tyrosine kinase activity"/>
    <property type="evidence" value="ECO:0000314"/>
    <property type="project" value="UniProtKB"/>
</dbReference>
<dbReference type="GO" id="GO:0005102">
    <property type="term" value="F:signaling receptor binding"/>
    <property type="evidence" value="ECO:0000266"/>
    <property type="project" value="RGD"/>
</dbReference>
<dbReference type="GO" id="GO:0038085">
    <property type="term" value="F:vascular endothelial growth factor binding"/>
    <property type="evidence" value="ECO:0000266"/>
    <property type="project" value="RGD"/>
</dbReference>
<dbReference type="GO" id="GO:0030325">
    <property type="term" value="P:adrenal gland development"/>
    <property type="evidence" value="ECO:0000266"/>
    <property type="project" value="RGD"/>
</dbReference>
<dbReference type="GO" id="GO:0001525">
    <property type="term" value="P:angiogenesis"/>
    <property type="evidence" value="ECO:0000318"/>
    <property type="project" value="GO_Central"/>
</dbReference>
<dbReference type="GO" id="GO:0035909">
    <property type="term" value="P:aorta morphogenesis"/>
    <property type="evidence" value="ECO:0000266"/>
    <property type="project" value="RGD"/>
</dbReference>
<dbReference type="GO" id="GO:0001568">
    <property type="term" value="P:blood vessel development"/>
    <property type="evidence" value="ECO:0000266"/>
    <property type="project" value="RGD"/>
</dbReference>
<dbReference type="GO" id="GO:0055003">
    <property type="term" value="P:cardiac myofibril assembly"/>
    <property type="evidence" value="ECO:0000250"/>
    <property type="project" value="UniProtKB"/>
</dbReference>
<dbReference type="GO" id="GO:0060326">
    <property type="term" value="P:cell chemotaxis"/>
    <property type="evidence" value="ECO:0000250"/>
    <property type="project" value="UniProtKB"/>
</dbReference>
<dbReference type="GO" id="GO:0060981">
    <property type="term" value="P:cell migration involved in coronary angiogenesis"/>
    <property type="evidence" value="ECO:0000250"/>
    <property type="project" value="UniProtKB"/>
</dbReference>
<dbReference type="GO" id="GO:0035441">
    <property type="term" value="P:cell migration involved in vasculogenesis"/>
    <property type="evidence" value="ECO:0000250"/>
    <property type="project" value="UniProtKB"/>
</dbReference>
<dbReference type="GO" id="GO:0007169">
    <property type="term" value="P:cell surface receptor protein tyrosine kinase signaling pathway"/>
    <property type="evidence" value="ECO:0000318"/>
    <property type="project" value="GO_Central"/>
</dbReference>
<dbReference type="GO" id="GO:0070301">
    <property type="term" value="P:cellular response to hydrogen peroxide"/>
    <property type="evidence" value="ECO:0000266"/>
    <property type="project" value="RGD"/>
</dbReference>
<dbReference type="GO" id="GO:0048568">
    <property type="term" value="P:embryonic organ development"/>
    <property type="evidence" value="ECO:0000266"/>
    <property type="project" value="RGD"/>
</dbReference>
<dbReference type="GO" id="GO:0006024">
    <property type="term" value="P:glycosaminoglycan biosynthetic process"/>
    <property type="evidence" value="ECO:0000315"/>
    <property type="project" value="RGD"/>
</dbReference>
<dbReference type="GO" id="GO:0001701">
    <property type="term" value="P:in utero embryonic development"/>
    <property type="evidence" value="ECO:0000266"/>
    <property type="project" value="RGD"/>
</dbReference>
<dbReference type="GO" id="GO:0048839">
    <property type="term" value="P:inner ear development"/>
    <property type="evidence" value="ECO:0000270"/>
    <property type="project" value="RGD"/>
</dbReference>
<dbReference type="GO" id="GO:0035556">
    <property type="term" value="P:intracellular signal transduction"/>
    <property type="evidence" value="ECO:0000315"/>
    <property type="project" value="RGD"/>
</dbReference>
<dbReference type="GO" id="GO:0001822">
    <property type="term" value="P:kidney development"/>
    <property type="evidence" value="ECO:0000266"/>
    <property type="project" value="RGD"/>
</dbReference>
<dbReference type="GO" id="GO:0060437">
    <property type="term" value="P:lung growth"/>
    <property type="evidence" value="ECO:0000315"/>
    <property type="project" value="RGD"/>
</dbReference>
<dbReference type="GO" id="GO:0008584">
    <property type="term" value="P:male gonad development"/>
    <property type="evidence" value="ECO:0000270"/>
    <property type="project" value="RGD"/>
</dbReference>
<dbReference type="GO" id="GO:0072278">
    <property type="term" value="P:metanephric comma-shaped body morphogenesis"/>
    <property type="evidence" value="ECO:0000270"/>
    <property type="project" value="UniProtKB"/>
</dbReference>
<dbReference type="GO" id="GO:0072277">
    <property type="term" value="P:metanephric glomerular capillary formation"/>
    <property type="evidence" value="ECO:0000250"/>
    <property type="project" value="UniProtKB"/>
</dbReference>
<dbReference type="GO" id="GO:0072262">
    <property type="term" value="P:metanephric glomerular mesangial cell proliferation involved in metanephros development"/>
    <property type="evidence" value="ECO:0000250"/>
    <property type="project" value="UniProtKB"/>
</dbReference>
<dbReference type="GO" id="GO:0072223">
    <property type="term" value="P:metanephric glomerular mesangium development"/>
    <property type="evidence" value="ECO:0000266"/>
    <property type="project" value="RGD"/>
</dbReference>
<dbReference type="GO" id="GO:0072275">
    <property type="term" value="P:metanephric glomerulus morphogenesis"/>
    <property type="evidence" value="ECO:0000270"/>
    <property type="project" value="UniProtKB"/>
</dbReference>
<dbReference type="GO" id="GO:0035789">
    <property type="term" value="P:metanephric mesenchymal cell migration"/>
    <property type="evidence" value="ECO:0000314"/>
    <property type="project" value="UniProtKB"/>
</dbReference>
<dbReference type="GO" id="GO:0072075">
    <property type="term" value="P:metanephric mesenchyme development"/>
    <property type="evidence" value="ECO:0000270"/>
    <property type="project" value="UniProtKB"/>
</dbReference>
<dbReference type="GO" id="GO:0072284">
    <property type="term" value="P:metanephric S-shaped body morphogenesis"/>
    <property type="evidence" value="ECO:0000270"/>
    <property type="project" value="UniProtKB"/>
</dbReference>
<dbReference type="GO" id="GO:0043066">
    <property type="term" value="P:negative regulation of apoptotic process"/>
    <property type="evidence" value="ECO:0000315"/>
    <property type="project" value="RGD"/>
</dbReference>
<dbReference type="GO" id="GO:0048008">
    <property type="term" value="P:platelet-derived growth factor receptor signaling pathway"/>
    <property type="evidence" value="ECO:0000266"/>
    <property type="project" value="RGD"/>
</dbReference>
<dbReference type="GO" id="GO:0035791">
    <property type="term" value="P:platelet-derived growth factor receptor-beta signaling pathway"/>
    <property type="evidence" value="ECO:0000266"/>
    <property type="project" value="RGD"/>
</dbReference>
<dbReference type="GO" id="GO:0043065">
    <property type="term" value="P:positive regulation of apoptotic process"/>
    <property type="evidence" value="ECO:0000315"/>
    <property type="project" value="RGD"/>
</dbReference>
<dbReference type="GO" id="GO:0090280">
    <property type="term" value="P:positive regulation of calcium ion import"/>
    <property type="evidence" value="ECO:0000250"/>
    <property type="project" value="UniProtKB"/>
</dbReference>
<dbReference type="GO" id="GO:0050850">
    <property type="term" value="P:positive regulation of calcium-mediated signaling"/>
    <property type="evidence" value="ECO:0000250"/>
    <property type="project" value="UniProtKB"/>
</dbReference>
<dbReference type="GO" id="GO:0030335">
    <property type="term" value="P:positive regulation of cell migration"/>
    <property type="evidence" value="ECO:0000250"/>
    <property type="project" value="UniProtKB"/>
</dbReference>
<dbReference type="GO" id="GO:0008284">
    <property type="term" value="P:positive regulation of cell population proliferation"/>
    <property type="evidence" value="ECO:0000315"/>
    <property type="project" value="RGD"/>
</dbReference>
<dbReference type="GO" id="GO:0038091">
    <property type="term" value="P:positive regulation of cell proliferation by VEGF-activated platelet derived growth factor receptor signaling pathway"/>
    <property type="evidence" value="ECO:0000266"/>
    <property type="project" value="RGD"/>
</dbReference>
<dbReference type="GO" id="GO:0050921">
    <property type="term" value="P:positive regulation of chemotaxis"/>
    <property type="evidence" value="ECO:0000250"/>
    <property type="project" value="UniProtKB"/>
</dbReference>
<dbReference type="GO" id="GO:0032967">
    <property type="term" value="P:positive regulation of collagen biosynthetic process"/>
    <property type="evidence" value="ECO:0000315"/>
    <property type="project" value="RGD"/>
</dbReference>
<dbReference type="GO" id="GO:2000573">
    <property type="term" value="P:positive regulation of DNA biosynthetic process"/>
    <property type="evidence" value="ECO:0000250"/>
    <property type="project" value="UniProtKB"/>
</dbReference>
<dbReference type="GO" id="GO:0070374">
    <property type="term" value="P:positive regulation of ERK1 and ERK2 cascade"/>
    <property type="evidence" value="ECO:0000250"/>
    <property type="project" value="UniProtKB"/>
</dbReference>
<dbReference type="GO" id="GO:0048146">
    <property type="term" value="P:positive regulation of fibroblast proliferation"/>
    <property type="evidence" value="ECO:0000315"/>
    <property type="project" value="RGD"/>
</dbReference>
<dbReference type="GO" id="GO:2000491">
    <property type="term" value="P:positive regulation of hepatic stellate cell activation"/>
    <property type="evidence" value="ECO:0000315"/>
    <property type="project" value="RGD"/>
</dbReference>
<dbReference type="GO" id="GO:0043406">
    <property type="term" value="P:positive regulation of MAP kinase activity"/>
    <property type="evidence" value="ECO:0000250"/>
    <property type="project" value="UniProtKB"/>
</dbReference>
<dbReference type="GO" id="GO:0035793">
    <property type="term" value="P:positive regulation of metanephric mesenchymal cell migration by platelet-derived growth factor receptor-beta signaling pathway"/>
    <property type="evidence" value="ECO:0000250"/>
    <property type="project" value="UniProtKB"/>
</dbReference>
<dbReference type="GO" id="GO:0045840">
    <property type="term" value="P:positive regulation of mitotic nuclear division"/>
    <property type="evidence" value="ECO:0000250"/>
    <property type="project" value="UniProtKB"/>
</dbReference>
<dbReference type="GO" id="GO:0051897">
    <property type="term" value="P:positive regulation of phosphatidylinositol 3-kinase/protein kinase B signal transduction"/>
    <property type="evidence" value="ECO:0000250"/>
    <property type="project" value="UniProtKB"/>
</dbReference>
<dbReference type="GO" id="GO:2000379">
    <property type="term" value="P:positive regulation of reactive oxygen species metabolic process"/>
    <property type="evidence" value="ECO:0000250"/>
    <property type="project" value="UniProtKB"/>
</dbReference>
<dbReference type="GO" id="GO:0035025">
    <property type="term" value="P:positive regulation of Rho protein signal transduction"/>
    <property type="evidence" value="ECO:0000315"/>
    <property type="project" value="RGD"/>
</dbReference>
<dbReference type="GO" id="GO:0014911">
    <property type="term" value="P:positive regulation of smooth muscle cell migration"/>
    <property type="evidence" value="ECO:0000250"/>
    <property type="project" value="UniProtKB"/>
</dbReference>
<dbReference type="GO" id="GO:0048661">
    <property type="term" value="P:positive regulation of smooth muscle cell proliferation"/>
    <property type="evidence" value="ECO:0000250"/>
    <property type="project" value="UniProtKB"/>
</dbReference>
<dbReference type="GO" id="GO:0032956">
    <property type="term" value="P:regulation of actin cytoskeleton organization"/>
    <property type="evidence" value="ECO:0000266"/>
    <property type="project" value="RGD"/>
</dbReference>
<dbReference type="GO" id="GO:0106096">
    <property type="term" value="P:response to ceramide"/>
    <property type="evidence" value="ECO:0000266"/>
    <property type="project" value="RGD"/>
</dbReference>
<dbReference type="GO" id="GO:0032355">
    <property type="term" value="P:response to estradiol"/>
    <property type="evidence" value="ECO:0000270"/>
    <property type="project" value="RGD"/>
</dbReference>
<dbReference type="GO" id="GO:0043627">
    <property type="term" value="P:response to estrogen"/>
    <property type="evidence" value="ECO:0000270"/>
    <property type="project" value="RGD"/>
</dbReference>
<dbReference type="GO" id="GO:0034405">
    <property type="term" value="P:response to fluid shear stress"/>
    <property type="evidence" value="ECO:0000270"/>
    <property type="project" value="RGD"/>
</dbReference>
<dbReference type="GO" id="GO:0042542">
    <property type="term" value="P:response to hydrogen peroxide"/>
    <property type="evidence" value="ECO:0000270"/>
    <property type="project" value="RGD"/>
</dbReference>
<dbReference type="GO" id="GO:0055093">
    <property type="term" value="P:response to hyperoxia"/>
    <property type="evidence" value="ECO:0000270"/>
    <property type="project" value="RGD"/>
</dbReference>
<dbReference type="GO" id="GO:0033993">
    <property type="term" value="P:response to lipid"/>
    <property type="evidence" value="ECO:0000270"/>
    <property type="project" value="RGD"/>
</dbReference>
<dbReference type="GO" id="GO:0032526">
    <property type="term" value="P:response to retinoic acid"/>
    <property type="evidence" value="ECO:0000270"/>
    <property type="project" value="RGD"/>
</dbReference>
<dbReference type="GO" id="GO:0009636">
    <property type="term" value="P:response to toxic substance"/>
    <property type="evidence" value="ECO:0000270"/>
    <property type="project" value="RGD"/>
</dbReference>
<dbReference type="GO" id="GO:0061298">
    <property type="term" value="P:retina vasculature development in camera-type eye"/>
    <property type="evidence" value="ECO:0000250"/>
    <property type="project" value="UniProtKB"/>
</dbReference>
<dbReference type="GO" id="GO:0097178">
    <property type="term" value="P:ruffle assembly"/>
    <property type="evidence" value="ECO:0000266"/>
    <property type="project" value="RGD"/>
</dbReference>
<dbReference type="GO" id="GO:0007165">
    <property type="term" value="P:signal transduction"/>
    <property type="evidence" value="ECO:0000266"/>
    <property type="project" value="RGD"/>
</dbReference>
<dbReference type="GO" id="GO:0048705">
    <property type="term" value="P:skeletal system morphogenesis"/>
    <property type="evidence" value="ECO:0000266"/>
    <property type="project" value="RGD"/>
</dbReference>
<dbReference type="GO" id="GO:0071670">
    <property type="term" value="P:smooth muscle cell chemotaxis"/>
    <property type="evidence" value="ECO:0000266"/>
    <property type="project" value="RGD"/>
</dbReference>
<dbReference type="GO" id="GO:0048745">
    <property type="term" value="P:smooth muscle tissue development"/>
    <property type="evidence" value="ECO:0000266"/>
    <property type="project" value="RGD"/>
</dbReference>
<dbReference type="GO" id="GO:0001894">
    <property type="term" value="P:tissue homeostasis"/>
    <property type="evidence" value="ECO:0000266"/>
    <property type="project" value="RGD"/>
</dbReference>
<dbReference type="CDD" id="cd00096">
    <property type="entry name" value="Ig"/>
    <property type="match status" value="1"/>
</dbReference>
<dbReference type="FunFam" id="3.30.200.20:FF:000025">
    <property type="entry name" value="Platelet-derived growth factor receptor alpha"/>
    <property type="match status" value="1"/>
</dbReference>
<dbReference type="FunFam" id="1.10.510.10:FF:000140">
    <property type="entry name" value="Platelet-derived growth factor receptor beta"/>
    <property type="match status" value="1"/>
</dbReference>
<dbReference type="FunFam" id="2.60.40.10:FF:000223">
    <property type="entry name" value="Platelet-derived growth factor receptor beta"/>
    <property type="match status" value="1"/>
</dbReference>
<dbReference type="FunFam" id="2.60.40.10:FF:000572">
    <property type="entry name" value="Platelet-derived growth factor receptor beta"/>
    <property type="match status" value="1"/>
</dbReference>
<dbReference type="FunFam" id="2.60.40.10:FF:000715">
    <property type="entry name" value="Platelet-derived growth factor receptor beta"/>
    <property type="match status" value="1"/>
</dbReference>
<dbReference type="FunFam" id="2.60.40.10:FF:000814">
    <property type="entry name" value="Platelet-derived growth factor receptor beta"/>
    <property type="match status" value="1"/>
</dbReference>
<dbReference type="FunFam" id="2.60.40.10:FF:000982">
    <property type="entry name" value="Platelet-derived growth factor receptor beta"/>
    <property type="match status" value="1"/>
</dbReference>
<dbReference type="Gene3D" id="2.60.40.10">
    <property type="entry name" value="Immunoglobulins"/>
    <property type="match status" value="5"/>
</dbReference>
<dbReference type="Gene3D" id="3.30.200.20">
    <property type="entry name" value="Phosphorylase Kinase, domain 1"/>
    <property type="match status" value="1"/>
</dbReference>
<dbReference type="Gene3D" id="1.10.510.10">
    <property type="entry name" value="Transferase(Phosphotransferase) domain 1"/>
    <property type="match status" value="1"/>
</dbReference>
<dbReference type="InterPro" id="IPR007110">
    <property type="entry name" value="Ig-like_dom"/>
</dbReference>
<dbReference type="InterPro" id="IPR036179">
    <property type="entry name" value="Ig-like_dom_sf"/>
</dbReference>
<dbReference type="InterPro" id="IPR013783">
    <property type="entry name" value="Ig-like_fold"/>
</dbReference>
<dbReference type="InterPro" id="IPR003599">
    <property type="entry name" value="Ig_sub"/>
</dbReference>
<dbReference type="InterPro" id="IPR003598">
    <property type="entry name" value="Ig_sub2"/>
</dbReference>
<dbReference type="InterPro" id="IPR013151">
    <property type="entry name" value="Immunoglobulin_dom"/>
</dbReference>
<dbReference type="InterPro" id="IPR011009">
    <property type="entry name" value="Kinase-like_dom_sf"/>
</dbReference>
<dbReference type="InterPro" id="IPR027288">
    <property type="entry name" value="PGFRB"/>
</dbReference>
<dbReference type="InterPro" id="IPR000719">
    <property type="entry name" value="Prot_kinase_dom"/>
</dbReference>
<dbReference type="InterPro" id="IPR017441">
    <property type="entry name" value="Protein_kinase_ATP_BS"/>
</dbReference>
<dbReference type="InterPro" id="IPR050122">
    <property type="entry name" value="RTK"/>
</dbReference>
<dbReference type="InterPro" id="IPR001245">
    <property type="entry name" value="Ser-Thr/Tyr_kinase_cat_dom"/>
</dbReference>
<dbReference type="InterPro" id="IPR008266">
    <property type="entry name" value="Tyr_kinase_AS"/>
</dbReference>
<dbReference type="InterPro" id="IPR020635">
    <property type="entry name" value="Tyr_kinase_cat_dom"/>
</dbReference>
<dbReference type="InterPro" id="IPR001824">
    <property type="entry name" value="Tyr_kinase_rcpt_3_CS"/>
</dbReference>
<dbReference type="PANTHER" id="PTHR24416:SF53">
    <property type="entry name" value="PLATELET-DERIVED GROWTH FACTOR RECEPTOR BETA"/>
    <property type="match status" value="1"/>
</dbReference>
<dbReference type="PANTHER" id="PTHR24416">
    <property type="entry name" value="TYROSINE-PROTEIN KINASE RECEPTOR"/>
    <property type="match status" value="1"/>
</dbReference>
<dbReference type="Pfam" id="PF00047">
    <property type="entry name" value="ig"/>
    <property type="match status" value="1"/>
</dbReference>
<dbReference type="Pfam" id="PF13927">
    <property type="entry name" value="Ig_3"/>
    <property type="match status" value="1"/>
</dbReference>
<dbReference type="Pfam" id="PF25305">
    <property type="entry name" value="Ig_PDGFR_d4"/>
    <property type="match status" value="1"/>
</dbReference>
<dbReference type="Pfam" id="PF07714">
    <property type="entry name" value="PK_Tyr_Ser-Thr"/>
    <property type="match status" value="1"/>
</dbReference>
<dbReference type="PIRSF" id="PIRSF500948">
    <property type="entry name" value="Beta-PDGF_receptor"/>
    <property type="match status" value="1"/>
</dbReference>
<dbReference type="PIRSF" id="PIRSF000615">
    <property type="entry name" value="TyrPK_CSF1-R"/>
    <property type="match status" value="1"/>
</dbReference>
<dbReference type="PRINTS" id="PR01832">
    <property type="entry name" value="VEGFRECEPTOR"/>
</dbReference>
<dbReference type="SMART" id="SM00409">
    <property type="entry name" value="IG"/>
    <property type="match status" value="3"/>
</dbReference>
<dbReference type="SMART" id="SM00408">
    <property type="entry name" value="IGc2"/>
    <property type="match status" value="3"/>
</dbReference>
<dbReference type="SMART" id="SM00219">
    <property type="entry name" value="TyrKc"/>
    <property type="match status" value="1"/>
</dbReference>
<dbReference type="SUPFAM" id="SSF48726">
    <property type="entry name" value="Immunoglobulin"/>
    <property type="match status" value="4"/>
</dbReference>
<dbReference type="SUPFAM" id="SSF56112">
    <property type="entry name" value="Protein kinase-like (PK-like)"/>
    <property type="match status" value="1"/>
</dbReference>
<dbReference type="PROSITE" id="PS50835">
    <property type="entry name" value="IG_LIKE"/>
    <property type="match status" value="3"/>
</dbReference>
<dbReference type="PROSITE" id="PS00107">
    <property type="entry name" value="PROTEIN_KINASE_ATP"/>
    <property type="match status" value="1"/>
</dbReference>
<dbReference type="PROSITE" id="PS50011">
    <property type="entry name" value="PROTEIN_KINASE_DOM"/>
    <property type="match status" value="1"/>
</dbReference>
<dbReference type="PROSITE" id="PS00109">
    <property type="entry name" value="PROTEIN_KINASE_TYR"/>
    <property type="match status" value="1"/>
</dbReference>
<dbReference type="PROSITE" id="PS00240">
    <property type="entry name" value="RECEPTOR_TYR_KIN_III"/>
    <property type="match status" value="1"/>
</dbReference>
<reference key="1">
    <citation type="submission" date="2002-03" db="EMBL/GenBank/DDBJ databases">
        <authorList>
            <person name="Wang Y."/>
            <person name="Culty M."/>
        </authorList>
    </citation>
    <scope>NUCLEOTIDE SEQUENCE [MRNA]</scope>
    <source>
        <strain>Sprague-Dawley</strain>
    </source>
</reference>
<reference key="2">
    <citation type="journal article" date="1993" name="Biochim. Biophys. Acta">
        <title>Conservation in sequence and affinity of human and rodent PDGF ligands and receptors.</title>
        <authorList>
            <person name="Herren B."/>
            <person name="Weyer K.A."/>
            <person name="Rouge M."/>
            <person name="Loetscher P."/>
            <person name="Pech M."/>
        </authorList>
    </citation>
    <scope>NUCLEOTIDE SEQUENCE [MRNA] OF 35-533</scope>
    <source>
        <strain>Sprague-Dawley</strain>
        <tissue>Brain</tissue>
    </source>
</reference>
<reference key="3">
    <citation type="journal article" date="2001" name="J. Biol. Chem.">
        <title>Regulation of cell growth by redox-mediated extracellular proteolysis of platelet-derived growth factor receptor beta.</title>
        <authorList>
            <person name="Okuyama H."/>
            <person name="Shimahara Y."/>
            <person name="Kawada N."/>
            <person name="Seki S."/>
            <person name="Kristensen D.B."/>
            <person name="Yoshizato K."/>
            <person name="Uyama N."/>
            <person name="Yamaoka Y."/>
        </authorList>
    </citation>
    <scope>NUCLEOTIDE SEQUENCE [MRNA] OF 528-1090</scope>
    <source>
        <strain>Wistar</strain>
    </source>
</reference>
<keyword id="KW-0067">ATP-binding</keyword>
<keyword id="KW-1003">Cell membrane</keyword>
<keyword id="KW-0145">Chemotaxis</keyword>
<keyword id="KW-0968">Cytoplasmic vesicle</keyword>
<keyword id="KW-0217">Developmental protein</keyword>
<keyword id="KW-1015">Disulfide bond</keyword>
<keyword id="KW-0325">Glycoprotein</keyword>
<keyword id="KW-0393">Immunoglobulin domain</keyword>
<keyword id="KW-0418">Kinase</keyword>
<keyword id="KW-0458">Lysosome</keyword>
<keyword id="KW-0472">Membrane</keyword>
<keyword id="KW-0547">Nucleotide-binding</keyword>
<keyword id="KW-0597">Phosphoprotein</keyword>
<keyword id="KW-0675">Receptor</keyword>
<keyword id="KW-1185">Reference proteome</keyword>
<keyword id="KW-0677">Repeat</keyword>
<keyword id="KW-0732">Signal</keyword>
<keyword id="KW-0808">Transferase</keyword>
<keyword id="KW-0812">Transmembrane</keyword>
<keyword id="KW-1133">Transmembrane helix</keyword>
<keyword id="KW-0829">Tyrosine-protein kinase</keyword>
<keyword id="KW-0832">Ubl conjugation</keyword>
<comment type="function">
    <text evidence="1">Tyrosine-protein kinase that acts as a cell-surface receptor for homodimeric PDGFB and PDGFD and for heterodimers formed by PDGFA and PDGFB, and plays an essential role in the regulation of embryonic development, cell proliferation, survival, differentiation, chemotaxis and migration. Plays an essential role in blood vessel development by promoting proliferation, migration and recruitment of pericytes and smooth muscle cells to endothelial cells. Plays a role in the migration of vascular smooth muscle cells and the formation of neointima at vascular injury sites. Required for normal development of the cardiovascular system. Required for normal recruitment of pericytes (mesangial cells) in the kidney glomerulus, and for normal formation of a branched network of capillaries in kidney glomeruli. Promotes rearrangement of the actin cytoskeleton and the formation of membrane ruffles. Binding of its cognate ligands - homodimeric PDGFB, heterodimers formed by PDGFA and PDGFB or homodimeric PDGFD -leads to the activation of several signaling cascades; the response depends on the nature of the bound ligand and is modulated by the formation of heterodimers between PDGFRA and PDGFRB. Phosphorylates PLCG1, PIK3R1, PTPN11, RASA1/GAP, CBL, SHC1 and NCK1. Activation of PLCG1 leads to the production of the cellular signaling molecules diacylglycerol and inositol 1,4,5-trisphosphate, mobilization of cytosolic Ca(2+) and the activation of protein kinase C. Phosphorylation of PIK3R1, the regulatory subunit of phosphatidylinositol 3-kinase, leads to the activation of the AKT1 signaling pathway. Phosphorylation of SHC1, or of the C-terminus of PTPN11, creates a binding site for GRB2, resulting in the activation of HRAS, RAF1 and down-stream MAP kinases, including MAPK1/ERK2 and/or MAPK3/ERK1. Promotes phosphorylation and activation of SRC family kinases. Promotes phosphorylation of PDCD6IP/ALIX and STAM. Receptor signaling is down-regulated by protein phosphatases that dephosphorylate the receptor and its down-stream effectors, and by rapid internalization of the activated receptor (By similarity).</text>
</comment>
<comment type="catalytic activity">
    <reaction evidence="7">
        <text>L-tyrosyl-[protein] + ATP = O-phospho-L-tyrosyl-[protein] + ADP + H(+)</text>
        <dbReference type="Rhea" id="RHEA:10596"/>
        <dbReference type="Rhea" id="RHEA-COMP:10136"/>
        <dbReference type="Rhea" id="RHEA-COMP:20101"/>
        <dbReference type="ChEBI" id="CHEBI:15378"/>
        <dbReference type="ChEBI" id="CHEBI:30616"/>
        <dbReference type="ChEBI" id="CHEBI:46858"/>
        <dbReference type="ChEBI" id="CHEBI:61978"/>
        <dbReference type="ChEBI" id="CHEBI:456216"/>
        <dbReference type="EC" id="2.7.10.1"/>
    </reaction>
</comment>
<comment type="activity regulation">
    <text evidence="1">Present in an inactive conformation in the absence of bound ligand. Binding of PDGFB and/or PDGFD leads to dimerization and activation by autophosphorylation on tyrosine residues (By similarity).</text>
</comment>
<comment type="subunit">
    <text evidence="1">Interacts with homodimeric PDGFB and PDGFD, and with heterodimers formed by PDGFA and PDGFB. May also interact with homodimeric PDGFC. Monomer in the absence of bound ligand. Interaction with homodimeric PDGFB, heterodimers formed by PDGFA and PDGFB or homodimeric PDGFD, leads to receptor dimerization, where both PDGFRA homodimers and heterodimers with PDGFRB are observed. Interacts with SH2B2/APS. Interacts directly (tyrosine phosphorylated) with SHB. Interacts (tyrosine phosphorylated) with PIK3R1 and RASA1. Interacts (tyrosine phosphorylated) with CBL. Interacts (tyrosine phosphorylated) with SRC and SRC family kinases. Interacts (tyrosine phosphorylated) with PIK3C2B, maybe indirectly. Interacts (tyrosine phosphorylated) with SHC1, GRB7, GRB10 and NCK1. Interaction with GRB2 is mediated by SHC1. Interacts (via C-terminus) with NHERF1 (By similarity).</text>
</comment>
<comment type="subcellular location">
    <subcellularLocation>
        <location evidence="1">Cell membrane</location>
        <topology evidence="1">Single-pass type I membrane protein</topology>
    </subcellularLocation>
    <subcellularLocation>
        <location evidence="1">Cytoplasmic vesicle</location>
    </subcellularLocation>
    <subcellularLocation>
        <location evidence="1">Lysosome lumen</location>
    </subcellularLocation>
    <text evidence="1">After ligand binding, the autophosphorylated receptor is ubiquitinated and internalized, leading to its degradation.</text>
</comment>
<comment type="PTM">
    <text evidence="1">N-glycosylated.</text>
</comment>
<comment type="PTM">
    <text evidence="1">Ubiquitinated. After autophosphorylation, the receptor is polyubiquitinated, leading to its degradation (By similarity).</text>
</comment>
<comment type="PTM">
    <text evidence="1">Autophosphorylated on tyrosine residues upon ligand binding. Autophosphorylation occurs in trans, i.e. one subunit of the dimeric receptor phosphorylates tyrosine residues on the other subunit. Phosphorylation at Tyr-578, and to a lesser degree, Tyr-580 is important for interaction with SRC. Phosphorylation at Tyr-715 is important for interaction with GRB2. Phosphorylation at Tyr-739 and Tyr-750 is important for interaction with PIK3R1. Phosphorylation at Tyr-750 is important for interaction with NCK1. Phosphorylation at Tyr-770 and Tyr-856 is important for interaction with RASA1/GAP. Phosphorylation at Tyr-856 is important for efficient phosphorylation of PLCG1 and PTPN11, resulting in increased phosphorylation of AKT1, MAPK1/ERK2 and/or MAPK3/ERK1, PDCD6IP/ALIX and STAM, and in increased cell proliferation. Phosphorylation at Tyr-1008 is important for interaction with PTPN11. Phosphorylation at Tyr-1008 and Tyr-1020 is important for interaction with PLCG1. Dephosphorylated by PTPRJ at Tyr-750, Tyr-856, Tyr-1008 and Tyr-1020. Dephosphorylated by PTPN2 at Tyr-578 and Tyr-1020 (By similarity).</text>
</comment>
<comment type="similarity">
    <text evidence="6">Belongs to the protein kinase superfamily. Tyr protein kinase family. CSF-1/PDGF receptor subfamily.</text>
</comment>
<evidence type="ECO:0000250" key="1"/>
<evidence type="ECO:0000250" key="2">
    <source>
        <dbReference type="UniProtKB" id="P05622"/>
    </source>
</evidence>
<evidence type="ECO:0000250" key="3">
    <source>
        <dbReference type="UniProtKB" id="P09619"/>
    </source>
</evidence>
<evidence type="ECO:0000255" key="4"/>
<evidence type="ECO:0000255" key="5">
    <source>
        <dbReference type="PROSITE-ProRule" id="PRU00114"/>
    </source>
</evidence>
<evidence type="ECO:0000255" key="6">
    <source>
        <dbReference type="PROSITE-ProRule" id="PRU00159"/>
    </source>
</evidence>
<evidence type="ECO:0000255" key="7">
    <source>
        <dbReference type="PROSITE-ProRule" id="PRU10028"/>
    </source>
</evidence>
<evidence type="ECO:0000256" key="8">
    <source>
        <dbReference type="SAM" id="MobiDB-lite"/>
    </source>
</evidence>
<sequence>MGLPEVMPASVLRGQLLLFVLLLLGPQISQGLVITPPGPEFVLNISSTFVLTCSSSAPVMWEQMSQVPWQEAAMNQDGTFSSVLTLTNVTGGDTGEYFCVYNNSLGPELSERKRIYIFVPDPTMGFLPMDSEDLFIFVTDVTETTIPCRVTDPQLEVTLHEKKVDIPLHVPYDHQRGFIGTFEDKTYICKTTIGDREVDSDTYYVYSLQVSSINVSVNAVQTVVRQGESITIRCIVMGNDVVNFQWTYPRMKSGRLVEPVTDYLFGVPSRIGSILHIPTAELSDSGTYTCNVSVSVNDHGDEKAINVTVIENGYVRLLETLEDVQIAELHRSRTLQVVFEAYPTPSVLWFKDNRTLGDSSAGELVLSTRNVSETRYVSELTLVRVKVSEAGYYTMRAFHADDQVQLSFKLQVNVPVRVLELSESHPANGEQILRCRGRGMPQPNVTWSTCRDLKRCPRKLSPTPLGNSSKEESQLETNVTFWEEDQEYEVVSTLRLRHVDQPLSVRCMLQNSMGRDSQEVTVVPHSLPFKVVVISAILALVVLTVISLIILIMLWQRKPRYEIRWKVIESVSSDGHEYIYVDPVQLPYDSTWELPRDQLVLGRTLGSGAFGQVVEATAHGLSHSQATMKVAVKMLKSTARSSEKQALMSELKIMSHLGPHLNVVNLLGACTKGGPIYIITEYCRYGDLVDYLHRNKHTFLQRHSNKHCPPSTELYSNALPVGLSLPSHLNLTGESDGGYMDMSKDESVDYVPMLDMKGHIKYADIESSSYMAPYDNYVPSAPERTYRATLINDSPVLSYTDLVGFSYQVANGMEFLASKNCVHRDLAARNVLICEGKLVKICDFGLARDIMRDSNYISKGSTFLPLKWMAPESIFNSLYTTLSDVWSFGILLWEIFTLGGTPYPELPMNDQFYNAIKRGYRMAQPAHASDEIYEIMQKCWEEKFETRPPFSQLVLLLERLLGEGYKKKYQQVDEEFLRSDHPAILRSQARLPGLHSLRSPLDTSSVLYTAVQPNETDNDYIIPLPDPKPDAADEGLLEGSPSLASSTLNEVNTSSTISCDSPLELQEEPQAEPEAQLEQPQDSGCPGPLAEAEDSFL</sequence>
<accession>Q05030</accession>
<accession>Q8R406</accession>
<accession>Q925F7</accession>
<organism>
    <name type="scientific">Rattus norvegicus</name>
    <name type="common">Rat</name>
    <dbReference type="NCBI Taxonomy" id="10116"/>
    <lineage>
        <taxon>Eukaryota</taxon>
        <taxon>Metazoa</taxon>
        <taxon>Chordata</taxon>
        <taxon>Craniata</taxon>
        <taxon>Vertebrata</taxon>
        <taxon>Euteleostomi</taxon>
        <taxon>Mammalia</taxon>
        <taxon>Eutheria</taxon>
        <taxon>Euarchontoglires</taxon>
        <taxon>Glires</taxon>
        <taxon>Rodentia</taxon>
        <taxon>Myomorpha</taxon>
        <taxon>Muroidea</taxon>
        <taxon>Muridae</taxon>
        <taxon>Murinae</taxon>
        <taxon>Rattus</taxon>
    </lineage>
</organism>
<name>PGFRB_RAT</name>
<proteinExistence type="evidence at transcript level"/>
<feature type="signal peptide" evidence="4">
    <location>
        <begin position="1"/>
        <end position="31"/>
    </location>
</feature>
<feature type="chain" id="PRO_0000016759" description="Platelet-derived growth factor receptor beta">
    <location>
        <begin position="32"/>
        <end position="1097"/>
    </location>
</feature>
<feature type="topological domain" description="Extracellular" evidence="4">
    <location>
        <begin position="32"/>
        <end position="531"/>
    </location>
</feature>
<feature type="transmembrane region" description="Helical" evidence="4">
    <location>
        <begin position="532"/>
        <end position="552"/>
    </location>
</feature>
<feature type="topological domain" description="Cytoplasmic" evidence="4">
    <location>
        <begin position="553"/>
        <end position="1097"/>
    </location>
</feature>
<feature type="domain" description="Ig-like C2-type 1">
    <location>
        <begin position="32"/>
        <end position="119"/>
    </location>
</feature>
<feature type="domain" description="Ig-like C2-type 2">
    <location>
        <begin position="128"/>
        <end position="209"/>
    </location>
</feature>
<feature type="domain" description="Ig-like C2-type 3">
    <location>
        <begin position="213"/>
        <end position="308"/>
    </location>
</feature>
<feature type="domain" description="Ig-like C2-type 4">
    <location>
        <begin position="415"/>
        <end position="523"/>
    </location>
</feature>
<feature type="domain" description="Protein kinase" evidence="6">
    <location>
        <begin position="599"/>
        <end position="961"/>
    </location>
</feature>
<feature type="region of interest" description="Disordered" evidence="8">
    <location>
        <begin position="1016"/>
        <end position="1097"/>
    </location>
</feature>
<feature type="compositionally biased region" description="Polar residues" evidence="8">
    <location>
        <begin position="1042"/>
        <end position="1059"/>
    </location>
</feature>
<feature type="compositionally biased region" description="Low complexity" evidence="8">
    <location>
        <begin position="1072"/>
        <end position="1081"/>
    </location>
</feature>
<feature type="active site" description="Proton acceptor" evidence="6 7">
    <location>
        <position position="825"/>
    </location>
</feature>
<feature type="binding site" evidence="6">
    <location>
        <begin position="605"/>
        <end position="613"/>
    </location>
    <ligand>
        <name>ATP</name>
        <dbReference type="ChEBI" id="CHEBI:30616"/>
    </ligand>
</feature>
<feature type="binding site" evidence="6">
    <location>
        <position position="633"/>
    </location>
    <ligand>
        <name>ATP</name>
        <dbReference type="ChEBI" id="CHEBI:30616"/>
    </ligand>
</feature>
<feature type="modified residue" description="Phosphotyrosine; by autocatalysis" evidence="3">
    <location>
        <position position="561"/>
    </location>
</feature>
<feature type="modified residue" description="Phosphotyrosine; by autocatalysis" evidence="3">
    <location>
        <position position="578"/>
    </location>
</feature>
<feature type="modified residue" description="Phosphotyrosine; by autocatalysis" evidence="3">
    <location>
        <position position="580"/>
    </location>
</feature>
<feature type="modified residue" description="Phosphotyrosine; by ABL1 and ABL2" evidence="2">
    <location>
        <position position="685"/>
    </location>
</feature>
<feature type="modified residue" description="Phosphotyrosine; by autocatalysis" evidence="3">
    <location>
        <position position="715"/>
    </location>
</feature>
<feature type="modified residue" description="Phosphotyrosine; by autocatalysis" evidence="3">
    <location>
        <position position="739"/>
    </location>
</feature>
<feature type="modified residue" description="Phosphotyrosine; by autocatalysis" evidence="3">
    <location>
        <position position="750"/>
    </location>
</feature>
<feature type="modified residue" description="Phosphotyrosine; by autocatalysis" evidence="3">
    <location>
        <position position="762"/>
    </location>
</feature>
<feature type="modified residue" description="Phosphotyrosine; by autocatalysis" evidence="3">
    <location>
        <position position="770"/>
    </location>
</feature>
<feature type="modified residue" description="Phosphotyrosine; by autocatalysis" evidence="3">
    <location>
        <position position="774"/>
    </location>
</feature>
<feature type="modified residue" description="Phosphotyrosine; by autocatalysis" evidence="3">
    <location>
        <position position="777"/>
    </location>
</feature>
<feature type="modified residue" description="Phosphotyrosine; by autocatalysis" evidence="3">
    <location>
        <position position="856"/>
    </location>
</feature>
<feature type="modified residue" description="Phosphotyrosine; by ABL1 and ABL2" evidence="2">
    <location>
        <position position="933"/>
    </location>
</feature>
<feature type="modified residue" description="Phosphotyrosine; by ABL1 and ABL2" evidence="2">
    <location>
        <position position="969"/>
    </location>
</feature>
<feature type="modified residue" description="Phosphotyrosine; by autocatalysis" evidence="3">
    <location>
        <position position="1008"/>
    </location>
</feature>
<feature type="modified residue" description="Phosphotyrosine; by autocatalysis" evidence="3">
    <location>
        <position position="1020"/>
    </location>
</feature>
<feature type="glycosylation site" description="N-linked (GlcNAc...) asparagine" evidence="4">
    <location>
        <position position="44"/>
    </location>
</feature>
<feature type="glycosylation site" description="N-linked (GlcNAc...) asparagine" evidence="4">
    <location>
        <position position="88"/>
    </location>
</feature>
<feature type="glycosylation site" description="N-linked (GlcNAc...) asparagine" evidence="4">
    <location>
        <position position="102"/>
    </location>
</feature>
<feature type="glycosylation site" description="N-linked (GlcNAc...) asparagine" evidence="4">
    <location>
        <position position="214"/>
    </location>
</feature>
<feature type="glycosylation site" description="N-linked (GlcNAc...) asparagine" evidence="4">
    <location>
        <position position="291"/>
    </location>
</feature>
<feature type="glycosylation site" description="N-linked (GlcNAc...) asparagine" evidence="4">
    <location>
        <position position="306"/>
    </location>
</feature>
<feature type="glycosylation site" description="N-linked (GlcNAc...) asparagine" evidence="4">
    <location>
        <position position="353"/>
    </location>
</feature>
<feature type="glycosylation site" description="N-linked (GlcNAc...) asparagine" evidence="4">
    <location>
        <position position="370"/>
    </location>
</feature>
<feature type="glycosylation site" description="N-linked (GlcNAc...) asparagine" evidence="4">
    <location>
        <position position="444"/>
    </location>
</feature>
<feature type="glycosylation site" description="N-linked (GlcNAc...) asparagine" evidence="4">
    <location>
        <position position="467"/>
    </location>
</feature>
<feature type="glycosylation site" description="N-linked (GlcNAc...) asparagine" evidence="4">
    <location>
        <position position="478"/>
    </location>
</feature>
<feature type="disulfide bond" evidence="5">
    <location>
        <begin position="53"/>
        <end position="99"/>
    </location>
</feature>
<feature type="disulfide bond" evidence="5">
    <location>
        <begin position="148"/>
        <end position="189"/>
    </location>
</feature>
<feature type="disulfide bond" evidence="5">
    <location>
        <begin position="234"/>
        <end position="290"/>
    </location>
</feature>
<feature type="disulfide bond" evidence="5">
    <location>
        <begin position="435"/>
        <end position="507"/>
    </location>
</feature>
<protein>
    <recommendedName>
        <fullName>Platelet-derived growth factor receptor beta</fullName>
        <shortName>PDGF-R-beta</shortName>
        <shortName>PDGFR-beta</shortName>
        <ecNumber>2.7.10.1</ecNumber>
    </recommendedName>
    <alternativeName>
        <fullName>Beta platelet-derived growth factor receptor</fullName>
    </alternativeName>
    <alternativeName>
        <fullName>Beta-type platelet-derived growth factor receptor</fullName>
    </alternativeName>
    <alternativeName>
        <fullName>CD140 antigen-like family member B</fullName>
    </alternativeName>
    <alternativeName>
        <fullName>Platelet-derived growth factor receptor 1</fullName>
        <shortName>PDGFR-1</shortName>
    </alternativeName>
    <cdAntigenName>CD140b</cdAntigenName>
</protein>